<proteinExistence type="inferred from homology"/>
<accession>G0R6T3</accession>
<keyword id="KW-0274">FAD</keyword>
<keyword id="KW-0285">Flavoprotein</keyword>
<keyword id="KW-0325">Glycoprotein</keyword>
<keyword id="KW-0560">Oxidoreductase</keyword>
<keyword id="KW-1185">Reference proteome</keyword>
<keyword id="KW-0732">Signal</keyword>
<sequence length="574" mass="60910">MYAPPFVRAFGIAVLAVLPSFSSPATAASLKSSGSSSSCRCFPGDACWPSPADWKAFNQSVGGRLIATVPLGSVCHGTTYDAARCADVKAAWPYADTHTDSSSSVLAPFFANQSCDPFLPRETPCVIGTYVQYAVNVSSVADIQKTLAFSQKKNLRLVVRNTGHDYFGKSTGAGGLGLWMHNLKTYDIHDYKSAAYTGKAVTMGAGIQAGESAATAFKQGLTIVSGICPTVGLAGGYTQGGGLGPLTTRYGLGADQVLEWHAVLANGSEITATPTKNSDLYWALTGGGGGTYAVVYSMTVKAHANEKTTGANLTFPNAGSEDVFFQGVQAFHDIIPAISDAGGTAVWTVLSKALSVGPVTGPNMTKATMDSIFQPVLQKLDALNITYSYSSGEFSSFYESNAAYDPPVVSNGLQIGGRLVKRSDFTGNPDGFIQAIRGIADQGGLVTGASYQLSSSLQHPPNSVNPELRKSLISFQIGVPWINTDWATDLHNQDLITNSFVPALAALLPSGGSAYLNQADFREPGWQQVFYGENYEKLLELKDVYDPNGVFWGRTTVGSERWAETEDKRLCRVS</sequence>
<protein>
    <recommendedName>
        <fullName evidence="7">FAD-linked oxidoreductase sor8</fullName>
        <ecNumber evidence="10">1.-.-.-</ecNumber>
    </recommendedName>
    <alternativeName>
        <fullName evidence="8">Sorbicillinoid biosynthetic cluster protein 8</fullName>
    </alternativeName>
</protein>
<evidence type="ECO:0000250" key="1">
    <source>
        <dbReference type="UniProtKB" id="B6HNK3"/>
    </source>
</evidence>
<evidence type="ECO:0000255" key="2"/>
<evidence type="ECO:0000255" key="3">
    <source>
        <dbReference type="PROSITE-ProRule" id="PRU00498"/>
    </source>
</evidence>
<evidence type="ECO:0000255" key="4">
    <source>
        <dbReference type="PROSITE-ProRule" id="PRU00718"/>
    </source>
</evidence>
<evidence type="ECO:0000269" key="5">
    <source>
    </source>
</evidence>
<evidence type="ECO:0000269" key="6">
    <source>
    </source>
</evidence>
<evidence type="ECO:0000303" key="7">
    <source>
    </source>
</evidence>
<evidence type="ECO:0000303" key="8">
    <source>
    </source>
</evidence>
<evidence type="ECO:0000305" key="9"/>
<evidence type="ECO:0000305" key="10">
    <source>
    </source>
</evidence>
<feature type="signal peptide" evidence="2">
    <location>
        <begin position="1"/>
        <end position="27"/>
    </location>
</feature>
<feature type="chain" id="PRO_5003408468" description="FAD-linked oxidoreductase sor8" evidence="2">
    <location>
        <begin position="28"/>
        <end position="574"/>
    </location>
</feature>
<feature type="domain" description="FAD-binding PCMH-type" evidence="4">
    <location>
        <begin position="126"/>
        <end position="305"/>
    </location>
</feature>
<feature type="glycosylation site" description="N-linked (GlcNAc...) asparagine" evidence="3">
    <location>
        <position position="58"/>
    </location>
</feature>
<feature type="glycosylation site" description="N-linked (GlcNAc...) asparagine" evidence="3">
    <location>
        <position position="112"/>
    </location>
</feature>
<feature type="glycosylation site" description="N-linked (GlcNAc...) asparagine" evidence="3">
    <location>
        <position position="136"/>
    </location>
</feature>
<feature type="glycosylation site" description="N-linked (GlcNAc...) asparagine" evidence="3">
    <location>
        <position position="266"/>
    </location>
</feature>
<feature type="glycosylation site" description="N-linked (GlcNAc...) asparagine" evidence="3">
    <location>
        <position position="312"/>
    </location>
</feature>
<feature type="glycosylation site" description="N-linked (GlcNAc...) asparagine" evidence="3">
    <location>
        <position position="363"/>
    </location>
</feature>
<feature type="glycosylation site" description="N-linked (GlcNAc...) asparagine" evidence="3">
    <location>
        <position position="384"/>
    </location>
</feature>
<gene>
    <name evidence="7" type="primary">sor8</name>
    <name evidence="8" type="synonym">sor4</name>
    <name type="ORF">TRIREDRAFT_73631</name>
</gene>
<name>SORD_HYPJQ</name>
<dbReference type="EC" id="1.-.-.-" evidence="10"/>
<dbReference type="EMBL" id="GL985056">
    <property type="protein sequence ID" value="EGR52692.1"/>
    <property type="molecule type" value="Genomic_DNA"/>
</dbReference>
<dbReference type="RefSeq" id="XP_006961562.1">
    <property type="nucleotide sequence ID" value="XM_006961500.1"/>
</dbReference>
<dbReference type="SMR" id="G0R6T3"/>
<dbReference type="STRING" id="431241.G0R6T3"/>
<dbReference type="GlyCosmos" id="G0R6T3">
    <property type="glycosylation" value="7 sites, No reported glycans"/>
</dbReference>
<dbReference type="EnsemblFungi" id="EGR52692">
    <property type="protein sequence ID" value="EGR52692"/>
    <property type="gene ID" value="TRIREDRAFT_73631"/>
</dbReference>
<dbReference type="GeneID" id="18488222"/>
<dbReference type="KEGG" id="tre:TRIREDRAFT_73631"/>
<dbReference type="VEuPathDB" id="FungiDB:TRIREDRAFT_73631"/>
<dbReference type="eggNOG" id="ENOG502R8I5">
    <property type="taxonomic scope" value="Eukaryota"/>
</dbReference>
<dbReference type="HOGENOM" id="CLU_018354_4_2_1"/>
<dbReference type="OrthoDB" id="9983560at2759"/>
<dbReference type="Proteomes" id="UP000008984">
    <property type="component" value="Unassembled WGS sequence"/>
</dbReference>
<dbReference type="GO" id="GO:0071949">
    <property type="term" value="F:FAD binding"/>
    <property type="evidence" value="ECO:0007669"/>
    <property type="project" value="InterPro"/>
</dbReference>
<dbReference type="GO" id="GO:0016491">
    <property type="term" value="F:oxidoreductase activity"/>
    <property type="evidence" value="ECO:0007669"/>
    <property type="project" value="UniProtKB-KW"/>
</dbReference>
<dbReference type="Gene3D" id="3.30.465.10">
    <property type="match status" value="2"/>
</dbReference>
<dbReference type="InterPro" id="IPR012951">
    <property type="entry name" value="BBE"/>
</dbReference>
<dbReference type="InterPro" id="IPR016166">
    <property type="entry name" value="FAD-bd_PCMH"/>
</dbReference>
<dbReference type="InterPro" id="IPR036318">
    <property type="entry name" value="FAD-bd_PCMH-like_sf"/>
</dbReference>
<dbReference type="InterPro" id="IPR016169">
    <property type="entry name" value="FAD-bd_PCMH_sub2"/>
</dbReference>
<dbReference type="InterPro" id="IPR050432">
    <property type="entry name" value="FAD-linked_Oxidoreductases_BP"/>
</dbReference>
<dbReference type="InterPro" id="IPR006094">
    <property type="entry name" value="Oxid_FAD_bind_N"/>
</dbReference>
<dbReference type="PANTHER" id="PTHR13878:SF91">
    <property type="entry name" value="FAD BINDING DOMAIN PROTEIN (AFU_ORTHOLOGUE AFUA_6G12070)-RELATED"/>
    <property type="match status" value="1"/>
</dbReference>
<dbReference type="PANTHER" id="PTHR13878">
    <property type="entry name" value="GULONOLACTONE OXIDASE"/>
    <property type="match status" value="1"/>
</dbReference>
<dbReference type="Pfam" id="PF08031">
    <property type="entry name" value="BBE"/>
    <property type="match status" value="1"/>
</dbReference>
<dbReference type="Pfam" id="PF01565">
    <property type="entry name" value="FAD_binding_4"/>
    <property type="match status" value="1"/>
</dbReference>
<dbReference type="SUPFAM" id="SSF56176">
    <property type="entry name" value="FAD-binding/transporter-associated domain-like"/>
    <property type="match status" value="1"/>
</dbReference>
<dbReference type="PROSITE" id="PS51387">
    <property type="entry name" value="FAD_PCMH"/>
    <property type="match status" value="1"/>
</dbReference>
<comment type="function">
    <text evidence="1 5 6">FAD-linked oxidoreductase; part of the SOR gene cluster that mediates the biosynthesis of sorbicillinoids, a diverse group of yellow secondary metabolites that restrict growth of competing pathogenic fungi but not of bacteria (PubMed:29104566). Sorbicillinoids biosynthesis requires the action of two PKSs (PubMed:28809958). The SOR cluster is required for the production of trichodimerol and dihydrotrichotetronin, with sor2 being sufficient for production of trichodimerol, but not dihydrotrichotetronin in the light (PubMed:28809958). Sor1 iteratively combines three acetyl units and the growing chain is modified by the ketoacyl reductase subunit, and optional by the enoyl reductase subunit in the second cycle (By similarity). The polyketide is then handed over to the PKS sor2, which adds three more acetyl units, and two methyl groups (By similarity). Sor2 releases an aldehyde, which undergoes spontaneous cyclization resulting in the formation of sorbicillin or 2',3'-dihydrosorbicillin (By similarity). The monooxygenase sor5 oxidizes sorbicillin and 2',3'-dihydrosorbicillin to 2',3'-dihydrosorbicillinol and sorbicillinol, respectively (PubMed:29104566). The oxidoreductase sor8 further converts sorbicillinol into oxosorbicillinol (PubMed:29104566). Sorbicillinol is the building block for the other sorbicillinoids such as disorbicillinol, bisvertinolon, dihydrobisvertinolone, and dihydrotrichotetronine (PubMed:28809958, PubMed:29104566).</text>
</comment>
<comment type="cofactor">
    <cofactor evidence="9">
        <name>FAD</name>
        <dbReference type="ChEBI" id="CHEBI:57692"/>
    </cofactor>
</comment>
<comment type="pathway">
    <text evidence="10">Secondary metabolite biosynthesis.</text>
</comment>
<comment type="disruption phenotype">
    <text evidence="6">Leads to the accumulation of dihydrosorbicillinol as well as to higher amounts of oxosorbicillinol (PubMed:29104566).</text>
</comment>
<comment type="similarity">
    <text evidence="9">Belongs to the oxygen-dependent FAD-linked oxidoreductase family.</text>
</comment>
<reference key="1">
    <citation type="journal article" date="2008" name="Nat. Biotechnol.">
        <title>Genome sequencing and analysis of the biomass-degrading fungus Trichoderma reesei (syn. Hypocrea jecorina).</title>
        <authorList>
            <person name="Martinez D."/>
            <person name="Berka R.M."/>
            <person name="Henrissat B."/>
            <person name="Saloheimo M."/>
            <person name="Arvas M."/>
            <person name="Baker S.E."/>
            <person name="Chapman J."/>
            <person name="Chertkov O."/>
            <person name="Coutinho P.M."/>
            <person name="Cullen D."/>
            <person name="Danchin E.G."/>
            <person name="Grigoriev I.V."/>
            <person name="Harris P."/>
            <person name="Jackson M."/>
            <person name="Kubicek C.P."/>
            <person name="Han C.S."/>
            <person name="Ho I."/>
            <person name="Larrondo L.F."/>
            <person name="de Leon A.L."/>
            <person name="Magnuson J.K."/>
            <person name="Merino S."/>
            <person name="Misra M."/>
            <person name="Nelson B."/>
            <person name="Putnam N."/>
            <person name="Robbertse B."/>
            <person name="Salamov A.A."/>
            <person name="Schmoll M."/>
            <person name="Terry A."/>
            <person name="Thayer N."/>
            <person name="Westerholm-Parvinen A."/>
            <person name="Schoch C.L."/>
            <person name="Yao J."/>
            <person name="Barabote R."/>
            <person name="Nelson M.A."/>
            <person name="Detter C."/>
            <person name="Bruce D."/>
            <person name="Kuske C.R."/>
            <person name="Xie G."/>
            <person name="Richardson P."/>
            <person name="Rokhsar D.S."/>
            <person name="Lucas S.M."/>
            <person name="Rubin E.M."/>
            <person name="Dunn-Coleman N."/>
            <person name="Ward M."/>
            <person name="Brettin T.S."/>
        </authorList>
    </citation>
    <scope>NUCLEOTIDE SEQUENCE [LARGE SCALE GENOMIC DNA]</scope>
    <source>
        <strain>QM6a</strain>
    </source>
</reference>
<reference key="2">
    <citation type="journal article" date="2016" name="BMC Evol. Biol.">
        <title>Several steps of lateral gene transfer followed by events of 'birth-and-death' evolution shaped a fungal sorbicillinoid biosynthetic gene cluster.</title>
        <authorList>
            <person name="Druzhinina I.S."/>
            <person name="Kubicek E.M."/>
            <person name="Kubicek C.P."/>
        </authorList>
    </citation>
    <scope>IDENTIFICATION</scope>
</reference>
<reference key="3">
    <citation type="journal article" date="2017" name="Front. Microbiol.">
        <title>In vivo study of the sorbicillinoid gene cluster in Trichoderma reesei.</title>
        <authorList>
            <person name="Derntl C."/>
            <person name="Guzman-Chavez F."/>
            <person name="Mello-de-Sousa T.M."/>
            <person name="Busse H.J."/>
            <person name="Driessen A.J.M."/>
            <person name="Mach R.L."/>
            <person name="Mach-Aigner A.R."/>
        </authorList>
    </citation>
    <scope>FUNCTION</scope>
    <scope>DISRUPTION PHENOTYPE</scope>
</reference>
<reference key="4">
    <citation type="journal article" date="2017" name="PLoS ONE">
        <title>A CRE1-regulated cluster is responsible for light dependent production of dihydrotrichotetronin in Trichoderma reesei.</title>
        <authorList>
            <person name="Monroy A.A."/>
            <person name="Stappler E."/>
            <person name="Schuster A."/>
            <person name="Sulyok M."/>
            <person name="Schmoll M."/>
        </authorList>
    </citation>
    <scope>FUNCTION</scope>
</reference>
<organism>
    <name type="scientific">Hypocrea jecorina (strain QM6a)</name>
    <name type="common">Trichoderma reesei</name>
    <dbReference type="NCBI Taxonomy" id="431241"/>
    <lineage>
        <taxon>Eukaryota</taxon>
        <taxon>Fungi</taxon>
        <taxon>Dikarya</taxon>
        <taxon>Ascomycota</taxon>
        <taxon>Pezizomycotina</taxon>
        <taxon>Sordariomycetes</taxon>
        <taxon>Hypocreomycetidae</taxon>
        <taxon>Hypocreales</taxon>
        <taxon>Hypocreaceae</taxon>
        <taxon>Trichoderma</taxon>
    </lineage>
</organism>